<protein>
    <recommendedName>
        <fullName evidence="1">tRNA/tmRNA (uracil-C(5))-methyltransferase</fullName>
        <ecNumber evidence="1">2.1.1.-</ecNumber>
        <ecNumber evidence="1">2.1.1.35</ecNumber>
    </recommendedName>
    <alternativeName>
        <fullName evidence="1">tRNA (uracil(54)-C(5))-methyltransferase</fullName>
    </alternativeName>
    <alternativeName>
        <fullName evidence="1">tRNA(m5U54)-methyltransferase</fullName>
        <shortName evidence="1">RUMT</shortName>
    </alternativeName>
    <alternativeName>
        <fullName evidence="1">tmRNA (uracil(341)-C(5))-methyltransferase</fullName>
    </alternativeName>
</protein>
<evidence type="ECO:0000255" key="1">
    <source>
        <dbReference type="HAMAP-Rule" id="MF_01011"/>
    </source>
</evidence>
<feature type="chain" id="PRO_0000161868" description="tRNA/tmRNA (uracil-C(5))-methyltransferase">
    <location>
        <begin position="1"/>
        <end position="362"/>
    </location>
</feature>
<feature type="active site" description="Nucleophile" evidence="1">
    <location>
        <position position="318"/>
    </location>
</feature>
<feature type="active site" description="Proton acceptor" evidence="1">
    <location>
        <position position="352"/>
    </location>
</feature>
<feature type="binding site" evidence="1">
    <location>
        <position position="182"/>
    </location>
    <ligand>
        <name>S-adenosyl-L-methionine</name>
        <dbReference type="ChEBI" id="CHEBI:59789"/>
    </ligand>
</feature>
<feature type="binding site" evidence="1">
    <location>
        <position position="210"/>
    </location>
    <ligand>
        <name>S-adenosyl-L-methionine</name>
        <dbReference type="ChEBI" id="CHEBI:59789"/>
    </ligand>
</feature>
<feature type="binding site" evidence="1">
    <location>
        <position position="215"/>
    </location>
    <ligand>
        <name>S-adenosyl-L-methionine</name>
        <dbReference type="ChEBI" id="CHEBI:59789"/>
    </ligand>
</feature>
<feature type="binding site" evidence="1">
    <location>
        <position position="231"/>
    </location>
    <ligand>
        <name>S-adenosyl-L-methionine</name>
        <dbReference type="ChEBI" id="CHEBI:59789"/>
    </ligand>
</feature>
<feature type="binding site" evidence="1">
    <location>
        <position position="293"/>
    </location>
    <ligand>
        <name>S-adenosyl-L-methionine</name>
        <dbReference type="ChEBI" id="CHEBI:59789"/>
    </ligand>
</feature>
<comment type="function">
    <text evidence="1">Dual-specificity methyltransferase that catalyzes the formation of 5-methyluridine at position 54 (m5U54) in all tRNAs, and that of position 341 (m5U341) in tmRNA (transfer-mRNA).</text>
</comment>
<comment type="catalytic activity">
    <reaction evidence="1">
        <text>uridine(54) in tRNA + S-adenosyl-L-methionine = 5-methyluridine(54) in tRNA + S-adenosyl-L-homocysteine + H(+)</text>
        <dbReference type="Rhea" id="RHEA:42712"/>
        <dbReference type="Rhea" id="RHEA-COMP:10167"/>
        <dbReference type="Rhea" id="RHEA-COMP:10193"/>
        <dbReference type="ChEBI" id="CHEBI:15378"/>
        <dbReference type="ChEBI" id="CHEBI:57856"/>
        <dbReference type="ChEBI" id="CHEBI:59789"/>
        <dbReference type="ChEBI" id="CHEBI:65315"/>
        <dbReference type="ChEBI" id="CHEBI:74447"/>
        <dbReference type="EC" id="2.1.1.35"/>
    </reaction>
</comment>
<comment type="catalytic activity">
    <reaction evidence="1">
        <text>uridine(341) in tmRNA + S-adenosyl-L-methionine = 5-methyluridine(341) in tmRNA + S-adenosyl-L-homocysteine + H(+)</text>
        <dbReference type="Rhea" id="RHEA:43612"/>
        <dbReference type="Rhea" id="RHEA-COMP:10630"/>
        <dbReference type="Rhea" id="RHEA-COMP:10631"/>
        <dbReference type="ChEBI" id="CHEBI:15378"/>
        <dbReference type="ChEBI" id="CHEBI:57856"/>
        <dbReference type="ChEBI" id="CHEBI:59789"/>
        <dbReference type="ChEBI" id="CHEBI:65315"/>
        <dbReference type="ChEBI" id="CHEBI:74447"/>
    </reaction>
</comment>
<comment type="similarity">
    <text evidence="1">Belongs to the class I-like SAM-binding methyltransferase superfamily. RNA M5U methyltransferase family. TrmA subfamily.</text>
</comment>
<sequence>MNDYTQQLQGKKDYLKTLFAGLDVPEWEVYESPDKHYRMRAEFRIWHEGGEMFYAMFEKGQKASGASMIRCDRFEAASEAVNRLMPELIAAAAQSPELKKRWYAVEFLSTLSGEMLVTMIYHKRLDAEWMQAAQALQQQLDISVIGRSRGQKIVLKQDYVTETLKVGNRDFRYRQIEGSFTQPNAAVCQKMLEWACRTAEGLGSDLLELYCGNGNFTLPLSRYFRQVLATEISKTSVSAAQWNIEANRIGNIKIARLSAEEFTEAYTGKREFKRLKDGGIALTDYAFSTIFVDPPRAGIDEETLKLVSQFDNIIYISCNPETLRANLDTLAETHAVERAALFDQFPFTHHIESGVLLKKKIL</sequence>
<dbReference type="EC" id="2.1.1.-" evidence="1"/>
<dbReference type="EC" id="2.1.1.35" evidence="1"/>
<dbReference type="EMBL" id="AE002098">
    <property type="protein sequence ID" value="AAF42027.1"/>
    <property type="molecule type" value="Genomic_DNA"/>
</dbReference>
<dbReference type="PIR" id="A81055">
    <property type="entry name" value="A81055"/>
</dbReference>
<dbReference type="RefSeq" id="NP_274683.1">
    <property type="nucleotide sequence ID" value="NC_003112.2"/>
</dbReference>
<dbReference type="RefSeq" id="WP_002224986.1">
    <property type="nucleotide sequence ID" value="NC_003112.2"/>
</dbReference>
<dbReference type="SMR" id="Q9JYA0"/>
<dbReference type="FunCoup" id="Q9JYA0">
    <property type="interactions" value="71"/>
</dbReference>
<dbReference type="STRING" id="122586.NMB1679"/>
<dbReference type="PaxDb" id="122586-NMB1679"/>
<dbReference type="DNASU" id="903429"/>
<dbReference type="KEGG" id="nme:NMB1679"/>
<dbReference type="PATRIC" id="fig|122586.8.peg.2161"/>
<dbReference type="HOGENOM" id="CLU_043022_0_0_4"/>
<dbReference type="InParanoid" id="Q9JYA0"/>
<dbReference type="OrthoDB" id="9804590at2"/>
<dbReference type="Proteomes" id="UP000000425">
    <property type="component" value="Chromosome"/>
</dbReference>
<dbReference type="GO" id="GO:0005829">
    <property type="term" value="C:cytosol"/>
    <property type="evidence" value="ECO:0000318"/>
    <property type="project" value="GO_Central"/>
</dbReference>
<dbReference type="GO" id="GO:0019843">
    <property type="term" value="F:rRNA binding"/>
    <property type="evidence" value="ECO:0000318"/>
    <property type="project" value="GO_Central"/>
</dbReference>
<dbReference type="GO" id="GO:0030697">
    <property type="term" value="F:tRNA (uracil(54)-C5)-methyltransferase activity, S-adenosyl methionine-dependent"/>
    <property type="evidence" value="ECO:0000318"/>
    <property type="project" value="GO_Central"/>
</dbReference>
<dbReference type="GO" id="GO:0000049">
    <property type="term" value="F:tRNA binding"/>
    <property type="evidence" value="ECO:0000318"/>
    <property type="project" value="GO_Central"/>
</dbReference>
<dbReference type="GO" id="GO:0030488">
    <property type="term" value="P:tRNA methylation"/>
    <property type="evidence" value="ECO:0007669"/>
    <property type="project" value="UniProtKB-UniRule"/>
</dbReference>
<dbReference type="CDD" id="cd02440">
    <property type="entry name" value="AdoMet_MTases"/>
    <property type="match status" value="1"/>
</dbReference>
<dbReference type="FunFam" id="2.40.50.1070:FF:000001">
    <property type="entry name" value="tRNA/tmRNA (uracil-C(5))-methyltransferase"/>
    <property type="match status" value="1"/>
</dbReference>
<dbReference type="FunFam" id="3.40.50.150:FF:000012">
    <property type="entry name" value="tRNA/tmRNA (uracil-C(5))-methyltransferase"/>
    <property type="match status" value="1"/>
</dbReference>
<dbReference type="Gene3D" id="2.40.50.1070">
    <property type="match status" value="1"/>
</dbReference>
<dbReference type="Gene3D" id="3.40.50.150">
    <property type="entry name" value="Vaccinia Virus protein VP39"/>
    <property type="match status" value="1"/>
</dbReference>
<dbReference type="HAMAP" id="MF_01011">
    <property type="entry name" value="RNA_methyltr_TrmA"/>
    <property type="match status" value="1"/>
</dbReference>
<dbReference type="InterPro" id="IPR030390">
    <property type="entry name" value="MeTrfase_TrmA_AS"/>
</dbReference>
<dbReference type="InterPro" id="IPR029063">
    <property type="entry name" value="SAM-dependent_MTases_sf"/>
</dbReference>
<dbReference type="InterPro" id="IPR011869">
    <property type="entry name" value="TrmA_MeTrfase"/>
</dbReference>
<dbReference type="InterPro" id="IPR010280">
    <property type="entry name" value="U5_MeTrfase_fam"/>
</dbReference>
<dbReference type="NCBIfam" id="TIGR02143">
    <property type="entry name" value="trmA_only"/>
    <property type="match status" value="1"/>
</dbReference>
<dbReference type="PANTHER" id="PTHR47790">
    <property type="entry name" value="TRNA/TMRNA (URACIL-C(5))-METHYLTRANSFERASE"/>
    <property type="match status" value="1"/>
</dbReference>
<dbReference type="PANTHER" id="PTHR47790:SF2">
    <property type="entry name" value="TRNA_TMRNA (URACIL-C(5))-METHYLTRANSFERASE"/>
    <property type="match status" value="1"/>
</dbReference>
<dbReference type="Pfam" id="PF05958">
    <property type="entry name" value="tRNA_U5-meth_tr"/>
    <property type="match status" value="1"/>
</dbReference>
<dbReference type="SUPFAM" id="SSF53335">
    <property type="entry name" value="S-adenosyl-L-methionine-dependent methyltransferases"/>
    <property type="match status" value="1"/>
</dbReference>
<dbReference type="PROSITE" id="PS51687">
    <property type="entry name" value="SAM_MT_RNA_M5U"/>
    <property type="match status" value="1"/>
</dbReference>
<dbReference type="PROSITE" id="PS01230">
    <property type="entry name" value="TRMA_1"/>
    <property type="match status" value="1"/>
</dbReference>
<gene>
    <name evidence="1" type="primary">trmA</name>
    <name type="ordered locus">NMB1679</name>
</gene>
<organism>
    <name type="scientific">Neisseria meningitidis serogroup B (strain ATCC BAA-335 / MC58)</name>
    <dbReference type="NCBI Taxonomy" id="122586"/>
    <lineage>
        <taxon>Bacteria</taxon>
        <taxon>Pseudomonadati</taxon>
        <taxon>Pseudomonadota</taxon>
        <taxon>Betaproteobacteria</taxon>
        <taxon>Neisseriales</taxon>
        <taxon>Neisseriaceae</taxon>
        <taxon>Neisseria</taxon>
    </lineage>
</organism>
<accession>Q9JYA0</accession>
<name>TRMA_NEIMB</name>
<keyword id="KW-0489">Methyltransferase</keyword>
<keyword id="KW-1185">Reference proteome</keyword>
<keyword id="KW-0949">S-adenosyl-L-methionine</keyword>
<keyword id="KW-0808">Transferase</keyword>
<keyword id="KW-0819">tRNA processing</keyword>
<proteinExistence type="inferred from homology"/>
<reference key="1">
    <citation type="journal article" date="2000" name="Science">
        <title>Complete genome sequence of Neisseria meningitidis serogroup B strain MC58.</title>
        <authorList>
            <person name="Tettelin H."/>
            <person name="Saunders N.J."/>
            <person name="Heidelberg J.F."/>
            <person name="Jeffries A.C."/>
            <person name="Nelson K.E."/>
            <person name="Eisen J.A."/>
            <person name="Ketchum K.A."/>
            <person name="Hood D.W."/>
            <person name="Peden J.F."/>
            <person name="Dodson R.J."/>
            <person name="Nelson W.C."/>
            <person name="Gwinn M.L."/>
            <person name="DeBoy R.T."/>
            <person name="Peterson J.D."/>
            <person name="Hickey E.K."/>
            <person name="Haft D.H."/>
            <person name="Salzberg S.L."/>
            <person name="White O."/>
            <person name="Fleischmann R.D."/>
            <person name="Dougherty B.A."/>
            <person name="Mason T.M."/>
            <person name="Ciecko A."/>
            <person name="Parksey D.S."/>
            <person name="Blair E."/>
            <person name="Cittone H."/>
            <person name="Clark E.B."/>
            <person name="Cotton M.D."/>
            <person name="Utterback T.R."/>
            <person name="Khouri H.M."/>
            <person name="Qin H."/>
            <person name="Vamathevan J.J."/>
            <person name="Gill J."/>
            <person name="Scarlato V."/>
            <person name="Masignani V."/>
            <person name="Pizza M."/>
            <person name="Grandi G."/>
            <person name="Sun L."/>
            <person name="Smith H.O."/>
            <person name="Fraser C.M."/>
            <person name="Moxon E.R."/>
            <person name="Rappuoli R."/>
            <person name="Venter J.C."/>
        </authorList>
    </citation>
    <scope>NUCLEOTIDE SEQUENCE [LARGE SCALE GENOMIC DNA]</scope>
    <source>
        <strain>ATCC BAA-335 / MC58</strain>
    </source>
</reference>